<accession>Q7WNT3</accession>
<name>RISB_BORBR</name>
<sequence length="175" mass="18678">MNPYILTPDLNGEGLHIGIVRARFNEEIGQAQLQACLEELGKLGVDERDVMVVSVPGALELGVALARMAESYEFDALIALGAVIRGETYHFEVVSNESAAAISRIALETGIPVANGVLTVDTDEQAQARAAGKGADCAQVAVEMANLAAALEPEEDDEDEDDEDEDFDDEEDDGR</sequence>
<comment type="function">
    <text evidence="1">Catalyzes the formation of 6,7-dimethyl-8-ribityllumazine by condensation of 5-amino-6-(D-ribitylamino)uracil with 3,4-dihydroxy-2-butanone 4-phosphate. This is the penultimate step in the biosynthesis of riboflavin.</text>
</comment>
<comment type="catalytic activity">
    <reaction evidence="1">
        <text>(2S)-2-hydroxy-3-oxobutyl phosphate + 5-amino-6-(D-ribitylamino)uracil = 6,7-dimethyl-8-(1-D-ribityl)lumazine + phosphate + 2 H2O + H(+)</text>
        <dbReference type="Rhea" id="RHEA:26152"/>
        <dbReference type="ChEBI" id="CHEBI:15377"/>
        <dbReference type="ChEBI" id="CHEBI:15378"/>
        <dbReference type="ChEBI" id="CHEBI:15934"/>
        <dbReference type="ChEBI" id="CHEBI:43474"/>
        <dbReference type="ChEBI" id="CHEBI:58201"/>
        <dbReference type="ChEBI" id="CHEBI:58830"/>
        <dbReference type="EC" id="2.5.1.78"/>
    </reaction>
</comment>
<comment type="pathway">
    <text evidence="1">Cofactor biosynthesis; riboflavin biosynthesis; riboflavin from 2-hydroxy-3-oxobutyl phosphate and 5-amino-6-(D-ribitylamino)uracil: step 1/2.</text>
</comment>
<comment type="similarity">
    <text evidence="1">Belongs to the DMRL synthase family.</text>
</comment>
<feature type="chain" id="PRO_0000134719" description="6,7-dimethyl-8-ribityllumazine synthase">
    <location>
        <begin position="1"/>
        <end position="175"/>
    </location>
</feature>
<feature type="region of interest" description="Disordered" evidence="2">
    <location>
        <begin position="150"/>
        <end position="175"/>
    </location>
</feature>
<feature type="compositionally biased region" description="Acidic residues" evidence="2">
    <location>
        <begin position="152"/>
        <end position="175"/>
    </location>
</feature>
<feature type="active site" description="Proton donor" evidence="1">
    <location>
        <position position="90"/>
    </location>
</feature>
<feature type="binding site" evidence="1">
    <location>
        <position position="24"/>
    </location>
    <ligand>
        <name>5-amino-6-(D-ribitylamino)uracil</name>
        <dbReference type="ChEBI" id="CHEBI:15934"/>
    </ligand>
</feature>
<feature type="binding site" evidence="1">
    <location>
        <begin position="58"/>
        <end position="60"/>
    </location>
    <ligand>
        <name>5-amino-6-(D-ribitylamino)uracil</name>
        <dbReference type="ChEBI" id="CHEBI:15934"/>
    </ligand>
</feature>
<feature type="binding site" evidence="1">
    <location>
        <begin position="82"/>
        <end position="84"/>
    </location>
    <ligand>
        <name>5-amino-6-(D-ribitylamino)uracil</name>
        <dbReference type="ChEBI" id="CHEBI:15934"/>
    </ligand>
</feature>
<feature type="binding site" evidence="1">
    <location>
        <begin position="87"/>
        <end position="88"/>
    </location>
    <ligand>
        <name>(2S)-2-hydroxy-3-oxobutyl phosphate</name>
        <dbReference type="ChEBI" id="CHEBI:58830"/>
    </ligand>
</feature>
<feature type="binding site" evidence="1">
    <location>
        <position position="115"/>
    </location>
    <ligand>
        <name>5-amino-6-(D-ribitylamino)uracil</name>
        <dbReference type="ChEBI" id="CHEBI:15934"/>
    </ligand>
</feature>
<feature type="binding site" evidence="1">
    <location>
        <position position="129"/>
    </location>
    <ligand>
        <name>(2S)-2-hydroxy-3-oxobutyl phosphate</name>
        <dbReference type="ChEBI" id="CHEBI:58830"/>
    </ligand>
</feature>
<organism>
    <name type="scientific">Bordetella bronchiseptica (strain ATCC BAA-588 / NCTC 13252 / RB50)</name>
    <name type="common">Alcaligenes bronchisepticus</name>
    <dbReference type="NCBI Taxonomy" id="257310"/>
    <lineage>
        <taxon>Bacteria</taxon>
        <taxon>Pseudomonadati</taxon>
        <taxon>Pseudomonadota</taxon>
        <taxon>Betaproteobacteria</taxon>
        <taxon>Burkholderiales</taxon>
        <taxon>Alcaligenaceae</taxon>
        <taxon>Bordetella</taxon>
    </lineage>
</organism>
<proteinExistence type="inferred from homology"/>
<reference key="1">
    <citation type="journal article" date="2003" name="Nat. Genet.">
        <title>Comparative analysis of the genome sequences of Bordetella pertussis, Bordetella parapertussis and Bordetella bronchiseptica.</title>
        <authorList>
            <person name="Parkhill J."/>
            <person name="Sebaihia M."/>
            <person name="Preston A."/>
            <person name="Murphy L.D."/>
            <person name="Thomson N.R."/>
            <person name="Harris D.E."/>
            <person name="Holden M.T.G."/>
            <person name="Churcher C.M."/>
            <person name="Bentley S.D."/>
            <person name="Mungall K.L."/>
            <person name="Cerdeno-Tarraga A.-M."/>
            <person name="Temple L."/>
            <person name="James K.D."/>
            <person name="Harris B."/>
            <person name="Quail M.A."/>
            <person name="Achtman M."/>
            <person name="Atkin R."/>
            <person name="Baker S."/>
            <person name="Basham D."/>
            <person name="Bason N."/>
            <person name="Cherevach I."/>
            <person name="Chillingworth T."/>
            <person name="Collins M."/>
            <person name="Cronin A."/>
            <person name="Davis P."/>
            <person name="Doggett J."/>
            <person name="Feltwell T."/>
            <person name="Goble A."/>
            <person name="Hamlin N."/>
            <person name="Hauser H."/>
            <person name="Holroyd S."/>
            <person name="Jagels K."/>
            <person name="Leather S."/>
            <person name="Moule S."/>
            <person name="Norberczak H."/>
            <person name="O'Neil S."/>
            <person name="Ormond D."/>
            <person name="Price C."/>
            <person name="Rabbinowitsch E."/>
            <person name="Rutter S."/>
            <person name="Sanders M."/>
            <person name="Saunders D."/>
            <person name="Seeger K."/>
            <person name="Sharp S."/>
            <person name="Simmonds M."/>
            <person name="Skelton J."/>
            <person name="Squares R."/>
            <person name="Squares S."/>
            <person name="Stevens K."/>
            <person name="Unwin L."/>
            <person name="Whitehead S."/>
            <person name="Barrell B.G."/>
            <person name="Maskell D.J."/>
        </authorList>
    </citation>
    <scope>NUCLEOTIDE SEQUENCE [LARGE SCALE GENOMIC DNA]</scope>
    <source>
        <strain>ATCC BAA-588 / NCTC 13252 / RB50</strain>
    </source>
</reference>
<evidence type="ECO:0000255" key="1">
    <source>
        <dbReference type="HAMAP-Rule" id="MF_00178"/>
    </source>
</evidence>
<evidence type="ECO:0000256" key="2">
    <source>
        <dbReference type="SAM" id="MobiDB-lite"/>
    </source>
</evidence>
<gene>
    <name evidence="1" type="primary">ribH</name>
    <name type="ordered locus">BB0952</name>
</gene>
<keyword id="KW-0686">Riboflavin biosynthesis</keyword>
<keyword id="KW-0808">Transferase</keyword>
<protein>
    <recommendedName>
        <fullName evidence="1">6,7-dimethyl-8-ribityllumazine synthase</fullName>
        <shortName evidence="1">DMRL synthase</shortName>
        <shortName evidence="1">LS</shortName>
        <shortName evidence="1">Lumazine synthase</shortName>
        <ecNumber evidence="1">2.5.1.78</ecNumber>
    </recommendedName>
</protein>
<dbReference type="EC" id="2.5.1.78" evidence="1"/>
<dbReference type="EMBL" id="BX640439">
    <property type="protein sequence ID" value="CAE31451.1"/>
    <property type="molecule type" value="Genomic_DNA"/>
</dbReference>
<dbReference type="RefSeq" id="WP_003808598.1">
    <property type="nucleotide sequence ID" value="NC_002927.3"/>
</dbReference>
<dbReference type="SMR" id="Q7WNT3"/>
<dbReference type="GeneID" id="93202608"/>
<dbReference type="KEGG" id="bbr:BB0952"/>
<dbReference type="eggNOG" id="COG0054">
    <property type="taxonomic scope" value="Bacteria"/>
</dbReference>
<dbReference type="HOGENOM" id="CLU_089358_1_2_4"/>
<dbReference type="UniPathway" id="UPA00275">
    <property type="reaction ID" value="UER00404"/>
</dbReference>
<dbReference type="Proteomes" id="UP000001027">
    <property type="component" value="Chromosome"/>
</dbReference>
<dbReference type="GO" id="GO:0005829">
    <property type="term" value="C:cytosol"/>
    <property type="evidence" value="ECO:0007669"/>
    <property type="project" value="TreeGrafter"/>
</dbReference>
<dbReference type="GO" id="GO:0009349">
    <property type="term" value="C:riboflavin synthase complex"/>
    <property type="evidence" value="ECO:0007669"/>
    <property type="project" value="InterPro"/>
</dbReference>
<dbReference type="GO" id="GO:0000906">
    <property type="term" value="F:6,7-dimethyl-8-ribityllumazine synthase activity"/>
    <property type="evidence" value="ECO:0007669"/>
    <property type="project" value="UniProtKB-UniRule"/>
</dbReference>
<dbReference type="GO" id="GO:0009231">
    <property type="term" value="P:riboflavin biosynthetic process"/>
    <property type="evidence" value="ECO:0007669"/>
    <property type="project" value="UniProtKB-UniRule"/>
</dbReference>
<dbReference type="CDD" id="cd09209">
    <property type="entry name" value="Lumazine_synthase-I"/>
    <property type="match status" value="1"/>
</dbReference>
<dbReference type="Gene3D" id="3.40.50.960">
    <property type="entry name" value="Lumazine/riboflavin synthase"/>
    <property type="match status" value="1"/>
</dbReference>
<dbReference type="HAMAP" id="MF_00178">
    <property type="entry name" value="Lumazine_synth"/>
    <property type="match status" value="1"/>
</dbReference>
<dbReference type="InterPro" id="IPR034964">
    <property type="entry name" value="LS"/>
</dbReference>
<dbReference type="InterPro" id="IPR002180">
    <property type="entry name" value="LS/RS"/>
</dbReference>
<dbReference type="InterPro" id="IPR036467">
    <property type="entry name" value="LS/RS_sf"/>
</dbReference>
<dbReference type="NCBIfam" id="TIGR00114">
    <property type="entry name" value="lumazine-synth"/>
    <property type="match status" value="1"/>
</dbReference>
<dbReference type="PANTHER" id="PTHR21058:SF0">
    <property type="entry name" value="6,7-DIMETHYL-8-RIBITYLLUMAZINE SYNTHASE"/>
    <property type="match status" value="1"/>
</dbReference>
<dbReference type="PANTHER" id="PTHR21058">
    <property type="entry name" value="6,7-DIMETHYL-8-RIBITYLLUMAZINE SYNTHASE DMRL SYNTHASE LUMAZINE SYNTHASE"/>
    <property type="match status" value="1"/>
</dbReference>
<dbReference type="Pfam" id="PF00885">
    <property type="entry name" value="DMRL_synthase"/>
    <property type="match status" value="1"/>
</dbReference>
<dbReference type="SUPFAM" id="SSF52121">
    <property type="entry name" value="Lumazine synthase"/>
    <property type="match status" value="1"/>
</dbReference>